<comment type="function">
    <text evidence="1">Transcription termination factor. Binds to a 28 bp region within the tRNA(Leu(uur)) gene at a position immediately adjacent to and downstream of the 16S rRNA gene; this region comprises a tridecamer sequence critical for directing accurate termination. Binds DNA along the major grove and promotes DNA bending and partial unwinding. Promotes base flipping. Transcription termination activity appears to be polarized with highest specificity for transcripts initiated on the light strand (By similarity).</text>
</comment>
<comment type="subunit">
    <text evidence="1">Monomer.</text>
</comment>
<comment type="subcellular location">
    <subcellularLocation>
        <location evidence="1">Mitochondrion</location>
    </subcellularLocation>
</comment>
<comment type="domain">
    <text evidence="1">Contains nine structural repeats of about 35 residues, where each repeat contains three helices. The repeats form a left-handed superhelical assembly with a solenoid structure that wraps itself around DNA (By similarity).</text>
</comment>
<comment type="PTM">
    <text evidence="1">Phosphoprotein with mostly four phosphate groups. While the DNA-binding activity is unaffected by the phosphorylation state, only the phosphorylated form of the protein is active for termination activity. Functioning seems to be regulated by phosphorylation (By similarity).</text>
</comment>
<comment type="similarity">
    <text evidence="3">Belongs to the mTERF family.</text>
</comment>
<gene>
    <name type="primary">MTERF1</name>
    <name type="synonym">MTERF</name>
</gene>
<proteinExistence type="evidence at transcript level"/>
<accession>Q5R9U8</accession>
<name>MTEF1_PONAB</name>
<keyword id="KW-0238">DNA-binding</keyword>
<keyword id="KW-0496">Mitochondrion</keyword>
<keyword id="KW-0597">Phosphoprotein</keyword>
<keyword id="KW-1185">Reference proteome</keyword>
<keyword id="KW-0677">Repeat</keyword>
<keyword id="KW-0804">Transcription</keyword>
<keyword id="KW-0805">Transcription regulation</keyword>
<keyword id="KW-0806">Transcription termination</keyword>
<keyword id="KW-0809">Transit peptide</keyword>
<sequence>MQSLSLGQTSISKGLNYLTIMAPGNLWHMRNNFLFGSRCWMTRFSAENIFKSVSFRLFGVKCHNTDSEPLKNEDLLKNLLTMGVDIDMARKRQPGVFHRMITNEQDLKMFLLSKGASKEVIASIISRYPRAITRTPENLSKRWDLWRKIVTSDLEIVNILERSPESFFRSNNNLNLENNIKFLYSVGLTRKCLCRLLTNAPRTFSNSLDLNKQMVEFLQAAGLSLGHNDPADFVRKIILKTLYLIQSTKRVKANIEFLRSTFNLNSEELLVLICGPGAEILDLSNDYARRSYANIKEKLFSLGCTEEEVQKFVLSYPDVIFLAEKKFNDKIDCLMEENISISQIIENPRVLDSSISTLKSRIKELVNAGCNLSTLNITLLSWSKKRYEAKLKKLSRFA</sequence>
<reference key="1">
    <citation type="submission" date="2004-11" db="EMBL/GenBank/DDBJ databases">
        <authorList>
            <consortium name="The German cDNA consortium"/>
        </authorList>
    </citation>
    <scope>NUCLEOTIDE SEQUENCE [LARGE SCALE MRNA]</scope>
    <source>
        <tissue>Heart</tissue>
    </source>
</reference>
<protein>
    <recommendedName>
        <fullName>Transcription termination factor 1, mitochondrial</fullName>
    </recommendedName>
    <alternativeName>
        <fullName>Mitochondrial transcription termination factor 1</fullName>
        <shortName>mTERF</shortName>
    </alternativeName>
</protein>
<organism>
    <name type="scientific">Pongo abelii</name>
    <name type="common">Sumatran orangutan</name>
    <name type="synonym">Pongo pygmaeus abelii</name>
    <dbReference type="NCBI Taxonomy" id="9601"/>
    <lineage>
        <taxon>Eukaryota</taxon>
        <taxon>Metazoa</taxon>
        <taxon>Chordata</taxon>
        <taxon>Craniata</taxon>
        <taxon>Vertebrata</taxon>
        <taxon>Euteleostomi</taxon>
        <taxon>Mammalia</taxon>
        <taxon>Eutheria</taxon>
        <taxon>Euarchontoglires</taxon>
        <taxon>Primates</taxon>
        <taxon>Haplorrhini</taxon>
        <taxon>Catarrhini</taxon>
        <taxon>Hominidae</taxon>
        <taxon>Pongo</taxon>
    </lineage>
</organism>
<evidence type="ECO:0000250" key="1"/>
<evidence type="ECO:0000255" key="2"/>
<evidence type="ECO:0000305" key="3"/>
<feature type="transit peptide" description="Mitochondrion" evidence="2">
    <location>
        <begin position="1"/>
        <end position="57"/>
    </location>
</feature>
<feature type="chain" id="PRO_0000021781" description="Transcription termination factor 1, mitochondrial">
    <location>
        <begin position="58"/>
        <end position="398"/>
    </location>
</feature>
<feature type="region of interest" description="Interaction with DNA" evidence="1">
    <location>
        <begin position="169"/>
        <end position="170"/>
    </location>
</feature>
<feature type="region of interest" description="Interaction with DNA" evidence="1">
    <location>
        <begin position="246"/>
        <end position="250"/>
    </location>
</feature>
<feature type="region of interest" description="Interaction with DNA" evidence="1">
    <location>
        <begin position="323"/>
        <end position="330"/>
    </location>
</feature>
<feature type="region of interest" description="Interaction with DNA" evidence="1">
    <location>
        <begin position="354"/>
        <end position="357"/>
    </location>
</feature>
<feature type="region of interest" description="Interaction with DNA" evidence="1">
    <location>
        <begin position="383"/>
        <end position="390"/>
    </location>
</feature>
<feature type="site" description="Interaction with DNA" evidence="1">
    <location>
        <position position="162"/>
    </location>
</feature>
<feature type="site" description="Interaction with DNA" evidence="1">
    <location>
        <position position="202"/>
    </location>
</feature>
<feature type="site" description="Interaction with DNA" evidence="1">
    <location>
        <position position="287"/>
    </location>
</feature>
<feature type="site" description="Interaction with DNA" evidence="1">
    <location>
        <position position="349"/>
    </location>
</feature>
<dbReference type="EMBL" id="CR859284">
    <property type="protein sequence ID" value="CAH91462.1"/>
    <property type="molecule type" value="mRNA"/>
</dbReference>
<dbReference type="SMR" id="Q5R9U8"/>
<dbReference type="FunCoup" id="Q5R9U8">
    <property type="interactions" value="1627"/>
</dbReference>
<dbReference type="STRING" id="9601.ENSPPYP00000019979"/>
<dbReference type="eggNOG" id="KOG1267">
    <property type="taxonomic scope" value="Eukaryota"/>
</dbReference>
<dbReference type="InParanoid" id="Q5R9U8"/>
<dbReference type="Proteomes" id="UP000001595">
    <property type="component" value="Unplaced"/>
</dbReference>
<dbReference type="GO" id="GO:0005759">
    <property type="term" value="C:mitochondrial matrix"/>
    <property type="evidence" value="ECO:0007669"/>
    <property type="project" value="TreeGrafter"/>
</dbReference>
<dbReference type="GO" id="GO:0003690">
    <property type="term" value="F:double-stranded DNA binding"/>
    <property type="evidence" value="ECO:0000250"/>
    <property type="project" value="UniProtKB"/>
</dbReference>
<dbReference type="GO" id="GO:0032392">
    <property type="term" value="P:DNA geometric change"/>
    <property type="evidence" value="ECO:0000250"/>
    <property type="project" value="UniProtKB"/>
</dbReference>
<dbReference type="GO" id="GO:0006353">
    <property type="term" value="P:DNA-templated transcription termination"/>
    <property type="evidence" value="ECO:0000250"/>
    <property type="project" value="UniProtKB"/>
</dbReference>
<dbReference type="GO" id="GO:0006355">
    <property type="term" value="P:regulation of DNA-templated transcription"/>
    <property type="evidence" value="ECO:0007669"/>
    <property type="project" value="InterPro"/>
</dbReference>
<dbReference type="GO" id="GO:0006393">
    <property type="term" value="P:termination of mitochondrial transcription"/>
    <property type="evidence" value="ECO:0000250"/>
    <property type="project" value="UniProtKB"/>
</dbReference>
<dbReference type="FunFam" id="1.25.70.10:FF:000007">
    <property type="entry name" value="Mitochondrial transcription termination factor 1"/>
    <property type="match status" value="1"/>
</dbReference>
<dbReference type="FunFam" id="1.25.70.10:FF:000003">
    <property type="entry name" value="transcription termination factor 2, mitochondrial"/>
    <property type="match status" value="1"/>
</dbReference>
<dbReference type="Gene3D" id="1.25.70.10">
    <property type="entry name" value="Transcription termination factor 3, mitochondrial"/>
    <property type="match status" value="2"/>
</dbReference>
<dbReference type="InterPro" id="IPR003690">
    <property type="entry name" value="MTERF"/>
</dbReference>
<dbReference type="InterPro" id="IPR038538">
    <property type="entry name" value="MTERF_sf"/>
</dbReference>
<dbReference type="PANTHER" id="PTHR15437:SF2">
    <property type="entry name" value="TRANSCRIPTION TERMINATION FACTOR 1, MITOCHONDRIAL"/>
    <property type="match status" value="1"/>
</dbReference>
<dbReference type="PANTHER" id="PTHR15437">
    <property type="entry name" value="TRANSCRIPTION TERMINATION FACTOR, MITOCHONDRIAL"/>
    <property type="match status" value="1"/>
</dbReference>
<dbReference type="Pfam" id="PF02536">
    <property type="entry name" value="mTERF"/>
    <property type="match status" value="1"/>
</dbReference>
<dbReference type="SMART" id="SM00733">
    <property type="entry name" value="Mterf"/>
    <property type="match status" value="6"/>
</dbReference>